<accession>Q6CUA2</accession>
<keyword id="KW-0175">Coiled coil</keyword>
<keyword id="KW-0472">Membrane</keyword>
<keyword id="KW-0496">Mitochondrion</keyword>
<keyword id="KW-0999">Mitochondrion inner membrane</keyword>
<keyword id="KW-1185">Reference proteome</keyword>
<keyword id="KW-0809">Transit peptide</keyword>
<keyword id="KW-0812">Transmembrane</keyword>
<keyword id="KW-1133">Transmembrane helix</keyword>
<protein>
    <recommendedName>
        <fullName>Sensitive to high expression protein 9 homolog, mitochondrial</fullName>
    </recommendedName>
</protein>
<feature type="transit peptide" description="Mitochondrion" evidence="2">
    <location>
        <begin position="1"/>
        <end status="unknown"/>
    </location>
</feature>
<feature type="chain" id="PRO_0000351058" description="Sensitive to high expression protein 9 homolog, mitochondrial">
    <location>
        <begin status="unknown"/>
        <end position="411"/>
    </location>
</feature>
<feature type="topological domain" description="Mitochondrial matrix" evidence="2">
    <location>
        <begin status="unknown"/>
        <end position="270"/>
    </location>
</feature>
<feature type="transmembrane region" description="Helical" evidence="2">
    <location>
        <begin position="271"/>
        <end position="291"/>
    </location>
</feature>
<feature type="topological domain" description="Mitochondrial intermembrane" evidence="2">
    <location>
        <begin position="292"/>
        <end position="411"/>
    </location>
</feature>
<feature type="coiled-coil region" evidence="2">
    <location>
        <begin position="69"/>
        <end position="103"/>
    </location>
</feature>
<feature type="coiled-coil region" evidence="2">
    <location>
        <begin position="148"/>
        <end position="250"/>
    </location>
</feature>
<evidence type="ECO:0000250" key="1"/>
<evidence type="ECO:0000255" key="2"/>
<evidence type="ECO:0000305" key="3"/>
<comment type="function">
    <text evidence="1">Required for the maintenance of the structure of the mitochondrial inner membrane. Involved in mitochondrial morphology. Causes growth arrest when highly overexpressed (By similarity).</text>
</comment>
<comment type="subunit">
    <text evidence="1">Homooligomer.</text>
</comment>
<comment type="subcellular location">
    <subcellularLocation>
        <location evidence="1">Mitochondrion inner membrane</location>
        <topology evidence="1">Single-pass membrane protein</topology>
    </subcellularLocation>
</comment>
<comment type="similarity">
    <text evidence="3">Belongs to the SHE9 family.</text>
</comment>
<reference key="1">
    <citation type="journal article" date="2004" name="Nature">
        <title>Genome evolution in yeasts.</title>
        <authorList>
            <person name="Dujon B."/>
            <person name="Sherman D."/>
            <person name="Fischer G."/>
            <person name="Durrens P."/>
            <person name="Casaregola S."/>
            <person name="Lafontaine I."/>
            <person name="de Montigny J."/>
            <person name="Marck C."/>
            <person name="Neuveglise C."/>
            <person name="Talla E."/>
            <person name="Goffard N."/>
            <person name="Frangeul L."/>
            <person name="Aigle M."/>
            <person name="Anthouard V."/>
            <person name="Babour A."/>
            <person name="Barbe V."/>
            <person name="Barnay S."/>
            <person name="Blanchin S."/>
            <person name="Beckerich J.-M."/>
            <person name="Beyne E."/>
            <person name="Bleykasten C."/>
            <person name="Boisrame A."/>
            <person name="Boyer J."/>
            <person name="Cattolico L."/>
            <person name="Confanioleri F."/>
            <person name="de Daruvar A."/>
            <person name="Despons L."/>
            <person name="Fabre E."/>
            <person name="Fairhead C."/>
            <person name="Ferry-Dumazet H."/>
            <person name="Groppi A."/>
            <person name="Hantraye F."/>
            <person name="Hennequin C."/>
            <person name="Jauniaux N."/>
            <person name="Joyet P."/>
            <person name="Kachouri R."/>
            <person name="Kerrest A."/>
            <person name="Koszul R."/>
            <person name="Lemaire M."/>
            <person name="Lesur I."/>
            <person name="Ma L."/>
            <person name="Muller H."/>
            <person name="Nicaud J.-M."/>
            <person name="Nikolski M."/>
            <person name="Oztas S."/>
            <person name="Ozier-Kalogeropoulos O."/>
            <person name="Pellenz S."/>
            <person name="Potier S."/>
            <person name="Richard G.-F."/>
            <person name="Straub M.-L."/>
            <person name="Suleau A."/>
            <person name="Swennen D."/>
            <person name="Tekaia F."/>
            <person name="Wesolowski-Louvel M."/>
            <person name="Westhof E."/>
            <person name="Wirth B."/>
            <person name="Zeniou-Meyer M."/>
            <person name="Zivanovic Y."/>
            <person name="Bolotin-Fukuhara M."/>
            <person name="Thierry A."/>
            <person name="Bouchier C."/>
            <person name="Caudron B."/>
            <person name="Scarpelli C."/>
            <person name="Gaillardin C."/>
            <person name="Weissenbach J."/>
            <person name="Wincker P."/>
            <person name="Souciet J.-L."/>
        </authorList>
    </citation>
    <scope>NUCLEOTIDE SEQUENCE [LARGE SCALE GENOMIC DNA]</scope>
    <source>
        <strain>ATCC 8585 / CBS 2359 / DSM 70799 / NBRC 1267 / NRRL Y-1140 / WM37</strain>
    </source>
</reference>
<dbReference type="EMBL" id="CR382123">
    <property type="protein sequence ID" value="CAH01338.1"/>
    <property type="molecule type" value="Genomic_DNA"/>
</dbReference>
<dbReference type="RefSeq" id="XP_452487.1">
    <property type="nucleotide sequence ID" value="XM_452487.1"/>
</dbReference>
<dbReference type="SMR" id="Q6CUA2"/>
<dbReference type="FunCoup" id="Q6CUA2">
    <property type="interactions" value="61"/>
</dbReference>
<dbReference type="PaxDb" id="284590-Q6CUA2"/>
<dbReference type="KEGG" id="kla:KLLA0_C06512g"/>
<dbReference type="eggNOG" id="ENOG502QQ1E">
    <property type="taxonomic scope" value="Eukaryota"/>
</dbReference>
<dbReference type="HOGENOM" id="CLU_025632_5_1_1"/>
<dbReference type="InParanoid" id="Q6CUA2"/>
<dbReference type="OMA" id="ENIELQW"/>
<dbReference type="Proteomes" id="UP000000598">
    <property type="component" value="Chromosome C"/>
</dbReference>
<dbReference type="GO" id="GO:0005743">
    <property type="term" value="C:mitochondrial inner membrane"/>
    <property type="evidence" value="ECO:0007669"/>
    <property type="project" value="UniProtKB-SubCell"/>
</dbReference>
<dbReference type="GO" id="GO:0007007">
    <property type="term" value="P:inner mitochondrial membrane organization"/>
    <property type="evidence" value="ECO:0007669"/>
    <property type="project" value="TreeGrafter"/>
</dbReference>
<dbReference type="InterPro" id="IPR008839">
    <property type="entry name" value="MDM33_fungi"/>
</dbReference>
<dbReference type="PANTHER" id="PTHR31961">
    <property type="entry name" value="SENSITIVE TO HIGH EXPRESSION PROTEIN 9, MITOCHONDRIAL"/>
    <property type="match status" value="1"/>
</dbReference>
<dbReference type="PANTHER" id="PTHR31961:SF3">
    <property type="entry name" value="SENSITIVE TO HIGH EXPRESSION PROTEIN 9, MITOCHONDRIAL"/>
    <property type="match status" value="1"/>
</dbReference>
<dbReference type="Pfam" id="PF05546">
    <property type="entry name" value="She9_MDM33"/>
    <property type="match status" value="1"/>
</dbReference>
<name>SHE9_KLULA</name>
<organism>
    <name type="scientific">Kluyveromyces lactis (strain ATCC 8585 / CBS 2359 / DSM 70799 / NBRC 1267 / NRRL Y-1140 / WM37)</name>
    <name type="common">Yeast</name>
    <name type="synonym">Candida sphaerica</name>
    <dbReference type="NCBI Taxonomy" id="284590"/>
    <lineage>
        <taxon>Eukaryota</taxon>
        <taxon>Fungi</taxon>
        <taxon>Dikarya</taxon>
        <taxon>Ascomycota</taxon>
        <taxon>Saccharomycotina</taxon>
        <taxon>Saccharomycetes</taxon>
        <taxon>Saccharomycetales</taxon>
        <taxon>Saccharomycetaceae</taxon>
        <taxon>Kluyveromyces</taxon>
    </lineage>
</organism>
<sequence length="411" mass="48248">MLVRRIIVRLPSSPRVWTQYNPRIFYSTGPNTNSTLVDTWKQKLGAYWEKSQNKANETANKLREYSVNFKTQWDKAQKSLKDANERLSQMENDSNDSKLNYNAEGKIKDLPSERERHRKKWARKMELYLDSLQETIFTATRALNDVTGYSSIQKLRNTISSLEEELKDTKKLVNEAKEKYETAIKARSGSQKEVNELLQRKNSWSPTDLDRFTQLYRDDALNSQTEEQSKVKLAELEAKEEELSTNLYRAILTRYHEEQIWSDKIRRTSTWGTFILMGVNILFFVIFQLLLEPWKRRRLVGSFEDKVKMALDDHQKEQNLAISEMSNTIDNLMDKKLQETQTKPHQEEVPKILTFSNIVADFKIWCSLQWTIYYNKLVTLLPETTVTFTKSCFYSYSTLLLSLGILLGHCI</sequence>
<proteinExistence type="inferred from homology"/>
<gene>
    <name type="primary">SHE9</name>
    <name type="ordered locus">KLLA0C06512g</name>
</gene>